<organism>
    <name type="scientific">Lithobates clamitans</name>
    <name type="common">Green frog</name>
    <name type="synonym">Rana clamitans</name>
    <dbReference type="NCBI Taxonomy" id="145282"/>
    <lineage>
        <taxon>Eukaryota</taxon>
        <taxon>Metazoa</taxon>
        <taxon>Chordata</taxon>
        <taxon>Craniata</taxon>
        <taxon>Vertebrata</taxon>
        <taxon>Euteleostomi</taxon>
        <taxon>Amphibia</taxon>
        <taxon>Batrachia</taxon>
        <taxon>Anura</taxon>
        <taxon>Neobatrachia</taxon>
        <taxon>Ranoidea</taxon>
        <taxon>Ranidae</taxon>
        <taxon>Lithobates</taxon>
    </lineage>
</organism>
<keyword id="KW-0027">Amidation</keyword>
<keyword id="KW-0878">Amphibian defense peptide</keyword>
<keyword id="KW-0044">Antibiotic</keyword>
<keyword id="KW-0929">Antimicrobial</keyword>
<keyword id="KW-0903">Direct protein sequencing</keyword>
<keyword id="KW-0964">Secreted</keyword>
<protein>
    <recommendedName>
        <fullName evidence="2">Temporin-1Ce</fullName>
    </recommendedName>
</protein>
<comment type="function">
    <text evidence="1">Antibacterial activity against Gram-positive bacterium S.aureus (MIC=100 uM).</text>
</comment>
<comment type="subcellular location">
    <subcellularLocation>
        <location evidence="1">Secreted</location>
    </subcellularLocation>
</comment>
<comment type="tissue specificity">
    <text evidence="4">Expressed by the skin glands.</text>
</comment>
<comment type="mass spectrometry" mass="1461.0" error="0.02" method="Electrospray" evidence="1"/>
<comment type="similarity">
    <text evidence="3">Belongs to the frog skin active peptide (FSAP) family. Temporin subfamily.</text>
</comment>
<name>TP1E_LITCL</name>
<reference key="1">
    <citation type="journal article" date="2000" name="Peptides">
        <title>Purification and characterization of antimicrobial peptides from the skin of the North American green frog Rana clamitans.</title>
        <authorList>
            <person name="Halverson T."/>
            <person name="Basir Y.J."/>
            <person name="Knoop F.C."/>
            <person name="Conlon J.M."/>
        </authorList>
    </citation>
    <scope>PROTEIN SEQUENCE</scope>
    <scope>FUNCTION</scope>
    <scope>AMIDATION AT LEU-13</scope>
    <scope>MASS SPECTROMETRY</scope>
    <scope>SUBCELLULAR LOCATION</scope>
    <source>
        <tissue>Skin secretion</tissue>
    </source>
</reference>
<sequence length="13" mass="1462">FLPFLATLLSKVL</sequence>
<proteinExistence type="evidence at protein level"/>
<evidence type="ECO:0000269" key="1">
    <source>
    </source>
</evidence>
<evidence type="ECO:0000303" key="2">
    <source>
    </source>
</evidence>
<evidence type="ECO:0000305" key="3"/>
<evidence type="ECO:0000305" key="4">
    <source>
    </source>
</evidence>
<feature type="peptide" id="PRO_0000043574" description="Temporin-1Ce" evidence="1">
    <location>
        <begin position="1"/>
        <end position="13"/>
    </location>
</feature>
<feature type="modified residue" description="Leucine amide" evidence="1">
    <location>
        <position position="13"/>
    </location>
</feature>
<accession>P82884</accession>
<dbReference type="GO" id="GO:0005576">
    <property type="term" value="C:extracellular region"/>
    <property type="evidence" value="ECO:0007669"/>
    <property type="project" value="UniProtKB-SubCell"/>
</dbReference>
<dbReference type="GO" id="GO:0042742">
    <property type="term" value="P:defense response to bacterium"/>
    <property type="evidence" value="ECO:0007669"/>
    <property type="project" value="UniProtKB-KW"/>
</dbReference>